<protein>
    <recommendedName>
        <fullName>Putative ribosomal protein uL16-like, mitochondrial</fullName>
    </recommendedName>
</protein>
<organism>
    <name type="scientific">Arabidopsis thaliana</name>
    <name type="common">Mouse-ear cress</name>
    <dbReference type="NCBI Taxonomy" id="3702"/>
    <lineage>
        <taxon>Eukaryota</taxon>
        <taxon>Viridiplantae</taxon>
        <taxon>Streptophyta</taxon>
        <taxon>Embryophyta</taxon>
        <taxon>Tracheophyta</taxon>
        <taxon>Spermatophyta</taxon>
        <taxon>Magnoliopsida</taxon>
        <taxon>eudicotyledons</taxon>
        <taxon>Gunneridae</taxon>
        <taxon>Pentapetalae</taxon>
        <taxon>rosids</taxon>
        <taxon>malvids</taxon>
        <taxon>Brassicales</taxon>
        <taxon>Brassicaceae</taxon>
        <taxon>Camelineae</taxon>
        <taxon>Arabidopsis</taxon>
    </lineage>
</organism>
<accession>Q84WZ8</accession>
<accession>F4IJM7</accession>
<accession>Q9ZV32</accession>
<reference key="1">
    <citation type="journal article" date="1999" name="Nature">
        <title>Sequence and analysis of chromosome 2 of the plant Arabidopsis thaliana.</title>
        <authorList>
            <person name="Lin X."/>
            <person name="Kaul S."/>
            <person name="Rounsley S.D."/>
            <person name="Shea T.P."/>
            <person name="Benito M.-I."/>
            <person name="Town C.D."/>
            <person name="Fujii C.Y."/>
            <person name="Mason T.M."/>
            <person name="Bowman C.L."/>
            <person name="Barnstead M.E."/>
            <person name="Feldblyum T.V."/>
            <person name="Buell C.R."/>
            <person name="Ketchum K.A."/>
            <person name="Lee J.J."/>
            <person name="Ronning C.M."/>
            <person name="Koo H.L."/>
            <person name="Moffat K.S."/>
            <person name="Cronin L.A."/>
            <person name="Shen M."/>
            <person name="Pai G."/>
            <person name="Van Aken S."/>
            <person name="Umayam L."/>
            <person name="Tallon L.J."/>
            <person name="Gill J.E."/>
            <person name="Adams M.D."/>
            <person name="Carrera A.J."/>
            <person name="Creasy T.H."/>
            <person name="Goodman H.M."/>
            <person name="Somerville C.R."/>
            <person name="Copenhaver G.P."/>
            <person name="Preuss D."/>
            <person name="Nierman W.C."/>
            <person name="White O."/>
            <person name="Eisen J.A."/>
            <person name="Salzberg S.L."/>
            <person name="Fraser C.M."/>
            <person name="Venter J.C."/>
        </authorList>
    </citation>
    <scope>NUCLEOTIDE SEQUENCE [LARGE SCALE GENOMIC DNA]</scope>
    <source>
        <strain>cv. Columbia</strain>
    </source>
</reference>
<reference key="2">
    <citation type="journal article" date="2017" name="Plant J.">
        <title>Araport11: a complete reannotation of the Arabidopsis thaliana reference genome.</title>
        <authorList>
            <person name="Cheng C.Y."/>
            <person name="Krishnakumar V."/>
            <person name="Chan A.P."/>
            <person name="Thibaud-Nissen F."/>
            <person name="Schobel S."/>
            <person name="Town C.D."/>
        </authorList>
    </citation>
    <scope>GENOME REANNOTATION</scope>
    <source>
        <strain>cv. Columbia</strain>
    </source>
</reference>
<reference key="3">
    <citation type="journal article" date="2002" name="Plant Physiol.">
        <title>Cloning and sequencing of cDNAs for hypothetical genes from chromosome 2 of Arabidopsis.</title>
        <authorList>
            <person name="Xiao Y.-L."/>
            <person name="Malik M."/>
            <person name="Whitelaw C.A."/>
            <person name="Town C.D."/>
        </authorList>
    </citation>
    <scope>NUCLEOTIDE SEQUENCE [LARGE SCALE MRNA]</scope>
    <source>
        <strain>cv. Columbia</strain>
    </source>
</reference>
<reference key="4">
    <citation type="journal article" date="2023" name="Plant Cell">
        <title>An updated nomenclature for plant ribosomal protein genes.</title>
        <authorList>
            <person name="Scarpin M.R."/>
            <person name="Busche M."/>
            <person name="Martinez R.E."/>
            <person name="Harper L.C."/>
            <person name="Reiser L."/>
            <person name="Szakonyi D."/>
            <person name="Merchante C."/>
            <person name="Lan T."/>
            <person name="Xiong W."/>
            <person name="Mo B."/>
            <person name="Tang G."/>
            <person name="Chen X."/>
            <person name="Bailey-Serres J."/>
            <person name="Browning K.S."/>
            <person name="Brunkard J.O."/>
        </authorList>
    </citation>
    <scope>NOMENCLATURE</scope>
</reference>
<dbReference type="EMBL" id="AC005727">
    <property type="protein sequence ID" value="AAC79600.1"/>
    <property type="status" value="ALT_SEQ"/>
    <property type="molecule type" value="Genomic_DNA"/>
</dbReference>
<dbReference type="EMBL" id="CP002685">
    <property type="protein sequence ID" value="ANM63166.1"/>
    <property type="molecule type" value="Genomic_DNA"/>
</dbReference>
<dbReference type="EMBL" id="AY219111">
    <property type="protein sequence ID" value="AAO37198.2"/>
    <property type="molecule type" value="mRNA"/>
</dbReference>
<dbReference type="PIR" id="C84689">
    <property type="entry name" value="C84689"/>
</dbReference>
<dbReference type="RefSeq" id="NP_001325273.1">
    <property type="nucleotide sequence ID" value="NM_001336189.1"/>
</dbReference>
<dbReference type="SMR" id="Q84WZ8"/>
<dbReference type="BioGRID" id="2782">
    <property type="interactions" value="3"/>
</dbReference>
<dbReference type="FunCoup" id="Q84WZ8">
    <property type="interactions" value="8"/>
</dbReference>
<dbReference type="STRING" id="3702.Q84WZ8"/>
<dbReference type="EnsemblPlants" id="AT2G28815.1">
    <property type="protein sequence ID" value="AT2G28815.1"/>
    <property type="gene ID" value="AT2G28815"/>
</dbReference>
<dbReference type="GeneID" id="28718313"/>
<dbReference type="Gramene" id="AT2G28815.1">
    <property type="protein sequence ID" value="AT2G28815.1"/>
    <property type="gene ID" value="AT2G28815"/>
</dbReference>
<dbReference type="KEGG" id="ath:AT2G28815"/>
<dbReference type="Araport" id="AT2G28815"/>
<dbReference type="TAIR" id="AT2G28815"/>
<dbReference type="HOGENOM" id="CLU_006348_5_1_1"/>
<dbReference type="InParanoid" id="Q84WZ8"/>
<dbReference type="OMA" id="DAFYCKS"/>
<dbReference type="Proteomes" id="UP000006548">
    <property type="component" value="Chromosome 2"/>
</dbReference>
<dbReference type="ExpressionAtlas" id="Q84WZ8">
    <property type="expression patterns" value="baseline and differential"/>
</dbReference>
<dbReference type="GO" id="GO:0005739">
    <property type="term" value="C:mitochondrion"/>
    <property type="evidence" value="ECO:0007669"/>
    <property type="project" value="UniProtKB-SubCell"/>
</dbReference>
<dbReference type="GO" id="GO:1990904">
    <property type="term" value="C:ribonucleoprotein complex"/>
    <property type="evidence" value="ECO:0007669"/>
    <property type="project" value="UniProtKB-KW"/>
</dbReference>
<dbReference type="GO" id="GO:0005840">
    <property type="term" value="C:ribosome"/>
    <property type="evidence" value="ECO:0007669"/>
    <property type="project" value="UniProtKB-KW"/>
</dbReference>
<dbReference type="GO" id="GO:0019843">
    <property type="term" value="F:rRNA binding"/>
    <property type="evidence" value="ECO:0007669"/>
    <property type="project" value="InterPro"/>
</dbReference>
<dbReference type="GO" id="GO:0003735">
    <property type="term" value="F:structural constituent of ribosome"/>
    <property type="evidence" value="ECO:0007669"/>
    <property type="project" value="InterPro"/>
</dbReference>
<dbReference type="GO" id="GO:0006412">
    <property type="term" value="P:translation"/>
    <property type="evidence" value="ECO:0007669"/>
    <property type="project" value="InterPro"/>
</dbReference>
<dbReference type="CDD" id="cd01433">
    <property type="entry name" value="Ribosomal_L16_L10e"/>
    <property type="match status" value="1"/>
</dbReference>
<dbReference type="FunFam" id="3.90.1170.10:FF:000001">
    <property type="entry name" value="50S ribosomal protein L16"/>
    <property type="match status" value="1"/>
</dbReference>
<dbReference type="Gene3D" id="3.90.1150.10">
    <property type="entry name" value="Aspartate Aminotransferase, domain 1"/>
    <property type="match status" value="1"/>
</dbReference>
<dbReference type="Gene3D" id="3.90.1170.10">
    <property type="entry name" value="Ribosomal protein L10e/L16"/>
    <property type="match status" value="1"/>
</dbReference>
<dbReference type="InterPro" id="IPR015422">
    <property type="entry name" value="PyrdxlP-dep_Trfase_small"/>
</dbReference>
<dbReference type="InterPro" id="IPR047873">
    <property type="entry name" value="Ribosomal_uL16"/>
</dbReference>
<dbReference type="InterPro" id="IPR000114">
    <property type="entry name" value="Ribosomal_uL16_bact-type"/>
</dbReference>
<dbReference type="InterPro" id="IPR020798">
    <property type="entry name" value="Ribosomal_uL16_CS"/>
</dbReference>
<dbReference type="InterPro" id="IPR016180">
    <property type="entry name" value="Ribosomal_uL16_dom"/>
</dbReference>
<dbReference type="InterPro" id="IPR036920">
    <property type="entry name" value="Ribosomal_uL16_sf"/>
</dbReference>
<dbReference type="NCBIfam" id="TIGR01164">
    <property type="entry name" value="rplP_bact"/>
    <property type="match status" value="1"/>
</dbReference>
<dbReference type="PANTHER" id="PTHR12220">
    <property type="entry name" value="50S/60S RIBOSOMAL PROTEIN L16"/>
    <property type="match status" value="1"/>
</dbReference>
<dbReference type="PANTHER" id="PTHR12220:SF13">
    <property type="entry name" value="LARGE RIBOSOMAL SUBUNIT PROTEIN UL16M"/>
    <property type="match status" value="1"/>
</dbReference>
<dbReference type="Pfam" id="PF00252">
    <property type="entry name" value="Ribosomal_L16"/>
    <property type="match status" value="1"/>
</dbReference>
<dbReference type="PRINTS" id="PR00060">
    <property type="entry name" value="RIBOSOMALL16"/>
</dbReference>
<dbReference type="SUPFAM" id="SSF54686">
    <property type="entry name" value="Ribosomal protein L16p/L10e"/>
    <property type="match status" value="1"/>
</dbReference>
<dbReference type="PROSITE" id="PS00701">
    <property type="entry name" value="RIBOSOMAL_L16_2"/>
    <property type="match status" value="1"/>
</dbReference>
<evidence type="ECO:0000250" key="1"/>
<evidence type="ECO:0000255" key="2"/>
<evidence type="ECO:0000256" key="3">
    <source>
        <dbReference type="SAM" id="MobiDB-lite"/>
    </source>
</evidence>
<evidence type="ECO:0000303" key="4">
    <source>
    </source>
</evidence>
<evidence type="ECO:0000305" key="5"/>
<name>RM16L_ARATH</name>
<keyword id="KW-0496">Mitochondrion</keyword>
<keyword id="KW-1185">Reference proteome</keyword>
<keyword id="KW-0687">Ribonucleoprotein</keyword>
<keyword id="KW-0689">Ribosomal protein</keyword>
<keyword id="KW-0809">Transit peptide</keyword>
<proteinExistence type="uncertain"/>
<gene>
    <name type="ordered locus">At2g28815</name>
    <name type="ORF">F8N16.11</name>
</gene>
<sequence>MQRFMFSRVVEHQRQISRGFLSLVPSLSPTAVPAMSRFFPKITASDSTSSIPFFTPDFINPKKTLEESLNNLEGLTCNQAEREMYLFPQINQQRLLNTTGSRFGQVLGTWQFRCTILPARVNRVREVHETSNNEKKQQKQKSSVNEKKPKKKKKSSISDIPRRTKFQKHHRGRINKGVSSQGYICSRYALQTLEPAWITSRQIEAGRRAMTRNIGRGLTVRVHIFADKPVTVRPPETRMGRGKGAPAFWVAVVKPGKIIYEMGGVSEKVAREAISIAASKLPAKTKFIISK</sequence>
<comment type="function">
    <text evidence="1">Could be a component of the large subunit of mitochondrial ribosome.</text>
</comment>
<comment type="subcellular location">
    <subcellularLocation>
        <location evidence="5">Mitochondrion</location>
    </subcellularLocation>
</comment>
<comment type="similarity">
    <text evidence="5">Belongs to the universal ribosomal protein uL16 family.</text>
</comment>
<comment type="caution">
    <text evidence="4">Could be the product of a pseudogene.</text>
</comment>
<comment type="sequence caution" evidence="5">
    <conflict type="erroneous gene model prediction">
        <sequence resource="EMBL-CDS" id="AAC79600"/>
    </conflict>
</comment>
<feature type="transit peptide" description="Mitochondrion" evidence="2">
    <location>
        <begin position="1"/>
        <end position="27"/>
    </location>
</feature>
<feature type="chain" id="PRO_0000416258" description="Putative ribosomal protein uL16-like, mitochondrial">
    <location>
        <begin position="28"/>
        <end position="291"/>
    </location>
</feature>
<feature type="region of interest" description="Disordered" evidence="3">
    <location>
        <begin position="127"/>
        <end position="173"/>
    </location>
</feature>
<feature type="compositionally biased region" description="Basic and acidic residues" evidence="3">
    <location>
        <begin position="127"/>
        <end position="137"/>
    </location>
</feature>
<feature type="compositionally biased region" description="Basic residues" evidence="3">
    <location>
        <begin position="163"/>
        <end position="173"/>
    </location>
</feature>